<keyword id="KW-1015">Disulfide bond</keyword>
<keyword id="KW-1170">Fusion of virus membrane with host endosomal membrane</keyword>
<keyword id="KW-1168">Fusion of virus membrane with host membrane</keyword>
<keyword id="KW-0325">Glycoprotein</keyword>
<keyword id="KW-0348">Hemagglutinin</keyword>
<keyword id="KW-1032">Host cell membrane</keyword>
<keyword id="KW-1043">Host membrane</keyword>
<keyword id="KW-0945">Host-virus interaction</keyword>
<keyword id="KW-0378">Hydrolase</keyword>
<keyword id="KW-0472">Membrane</keyword>
<keyword id="KW-0812">Transmembrane</keyword>
<keyword id="KW-1133">Transmembrane helix</keyword>
<keyword id="KW-1161">Viral attachment to host cell</keyword>
<keyword id="KW-0261">Viral envelope protein</keyword>
<keyword id="KW-1162">Viral penetration into host cytoplasm</keyword>
<keyword id="KW-0946">Virion</keyword>
<keyword id="KW-1164">Virus endocytosis by host</keyword>
<keyword id="KW-1160">Virus entry into host cell</keyword>
<proteinExistence type="inferred from homology"/>
<gene>
    <name evidence="1" type="primary">HE</name>
</gene>
<sequence>AEKIKICLQKQVNSSFSLHNVFGGNLYATEEKRMFELVKPKAGASVLNQSTWICFGDSRTDQSNSAFPRSADVSAKTAEKFRSLSGGSLMLSMFGPPGKVDYLYQGCGKHKVFYEGVNWSPHAAIDCYRKNWTDIKLNFQKSIYELASQSHCMSLVNALDKTIPLQATKGVAKNCNNSFLKNPALYTQEVKPLEQICGEENLAFFTLPTQFGTYECKLHLVASCYFIYDSKEVYNKRGCGNYFQVIYDSSGKVVGGLDNRVSPYTGNSGDTPTMQCDMLQLKPGRYSVRSSPRFLLMPERSYCFDMKEKGLVTAVQSIWGKGRKSDYAVDQACLSTPGCMLIQKQKPYIGEADDHHGDQEMRELLSGLDYEARCISQSGWVNETSPFTEEYLLPPKFGRCPLAAKEESIPKIPDGLLIPTSGTDTTVTKPKSRIFGIDDLIIGLFFVAIVEAGIGGYLLGSRKESGGGVTKESAEKGFEKIGNDIQILRSSTNIAIEKLNDRISHDEQAIRDLTLEIENARSEALLGELGIIRALLVGNISIGLQESLWELASEITNRAGDLAVEVSPGCWIIDNNICDQSCQNFIFKFNETAPVPTIPPLDTKIDLQSDPFYWGSSLGLAITTPISLAALVISGIAICRTK</sequence>
<reference key="1">
    <citation type="journal article" date="1985" name="Virology">
        <title>Noncumulative sequence changes in the hemagglutinin genes of influenza C virus isolates.</title>
        <authorList>
            <person name="Buonagurio D.A."/>
            <person name="Nakada S."/>
            <person name="Desselberger U."/>
            <person name="Krystal M."/>
            <person name="Palese P."/>
        </authorList>
    </citation>
    <scope>NUCLEOTIDE SEQUENCE [GENOMIC RNA]</scope>
</reference>
<dbReference type="EC" id="3.1.1.53" evidence="1"/>
<dbReference type="EMBL" id="M11643">
    <property type="protein sequence ID" value="AAA43792.1"/>
    <property type="molecule type" value="Genomic_RNA"/>
</dbReference>
<dbReference type="SMR" id="P07968"/>
<dbReference type="GlyCosmos" id="P07968">
    <property type="glycosylation" value="7 sites, No reported glycans"/>
</dbReference>
<dbReference type="GO" id="GO:0020002">
    <property type="term" value="C:host cell plasma membrane"/>
    <property type="evidence" value="ECO:0007669"/>
    <property type="project" value="UniProtKB-SubCell"/>
</dbReference>
<dbReference type="GO" id="GO:0016020">
    <property type="term" value="C:membrane"/>
    <property type="evidence" value="ECO:0007669"/>
    <property type="project" value="UniProtKB-KW"/>
</dbReference>
<dbReference type="GO" id="GO:0019031">
    <property type="term" value="C:viral envelope"/>
    <property type="evidence" value="ECO:0007669"/>
    <property type="project" value="UniProtKB-KW"/>
</dbReference>
<dbReference type="GO" id="GO:0055036">
    <property type="term" value="C:virion membrane"/>
    <property type="evidence" value="ECO:0007669"/>
    <property type="project" value="UniProtKB-SubCell"/>
</dbReference>
<dbReference type="GO" id="GO:0046789">
    <property type="term" value="F:host cell surface receptor binding"/>
    <property type="evidence" value="ECO:0007669"/>
    <property type="project" value="InterPro"/>
</dbReference>
<dbReference type="GO" id="GO:0106331">
    <property type="term" value="F:sialate 4-O-acetylesterase activity"/>
    <property type="evidence" value="ECO:0007669"/>
    <property type="project" value="RHEA"/>
</dbReference>
<dbReference type="GO" id="GO:0106330">
    <property type="term" value="F:sialate 9-O-acetylesterase activity"/>
    <property type="evidence" value="ECO:0007669"/>
    <property type="project" value="RHEA"/>
</dbReference>
<dbReference type="GO" id="GO:0075509">
    <property type="term" value="P:endocytosis involved in viral entry into host cell"/>
    <property type="evidence" value="ECO:0007669"/>
    <property type="project" value="UniProtKB-KW"/>
</dbReference>
<dbReference type="GO" id="GO:0039654">
    <property type="term" value="P:fusion of virus membrane with host endosome membrane"/>
    <property type="evidence" value="ECO:0007669"/>
    <property type="project" value="UniProtKB-KW"/>
</dbReference>
<dbReference type="GO" id="GO:0019064">
    <property type="term" value="P:fusion of virus membrane with host plasma membrane"/>
    <property type="evidence" value="ECO:0007669"/>
    <property type="project" value="InterPro"/>
</dbReference>
<dbReference type="GO" id="GO:0019062">
    <property type="term" value="P:virion attachment to host cell"/>
    <property type="evidence" value="ECO:0007669"/>
    <property type="project" value="UniProtKB-KW"/>
</dbReference>
<dbReference type="Gene3D" id="2.20.70.20">
    <property type="match status" value="2"/>
</dbReference>
<dbReference type="Gene3D" id="3.90.20.10">
    <property type="match status" value="1"/>
</dbReference>
<dbReference type="HAMAP" id="MF_04072">
    <property type="entry name" value="INFV_HEMA"/>
    <property type="match status" value="1"/>
</dbReference>
<dbReference type="InterPro" id="IPR008980">
    <property type="entry name" value="Capsid_hemagglutn"/>
</dbReference>
<dbReference type="InterPro" id="IPR007142">
    <property type="entry name" value="Hemagglutn-estrase_core"/>
</dbReference>
<dbReference type="InterPro" id="IPR003860">
    <property type="entry name" value="Hemagglutn-estrase_hemagglutn"/>
</dbReference>
<dbReference type="InterPro" id="IPR001364">
    <property type="entry name" value="Hemagglutn_influenz_A/B"/>
</dbReference>
<dbReference type="InterPro" id="IPR014831">
    <property type="entry name" value="Hemagglutn_stalk_influenz-C"/>
</dbReference>
<dbReference type="Pfam" id="PF03996">
    <property type="entry name" value="Hema_esterase"/>
    <property type="match status" value="1"/>
</dbReference>
<dbReference type="Pfam" id="PF02710">
    <property type="entry name" value="Hema_HEFG"/>
    <property type="match status" value="1"/>
</dbReference>
<dbReference type="Pfam" id="PF08720">
    <property type="entry name" value="Hema_stalk"/>
    <property type="match status" value="1"/>
</dbReference>
<dbReference type="SUPFAM" id="SSF58064">
    <property type="entry name" value="Influenza hemagglutinin (stalk)"/>
    <property type="match status" value="1"/>
</dbReference>
<dbReference type="SUPFAM" id="SSF52266">
    <property type="entry name" value="SGNH hydrolase"/>
    <property type="match status" value="1"/>
</dbReference>
<dbReference type="SUPFAM" id="SSF49818">
    <property type="entry name" value="Viral protein domain"/>
    <property type="match status" value="1"/>
</dbReference>
<accession>P07968</accession>
<protein>
    <recommendedName>
        <fullName evidence="1">Hemagglutinin-esterase-fusion glycoprotein</fullName>
        <shortName evidence="1">HEF</shortName>
        <ecNumber evidence="1">3.1.1.53</ecNumber>
    </recommendedName>
    <component>
        <recommendedName>
            <fullName evidence="1">Hemagglutinin-esterase-fusion glycoprotein chain 1</fullName>
            <shortName evidence="1">HEF1</shortName>
        </recommendedName>
    </component>
    <component>
        <recommendedName>
            <fullName evidence="1">Hemagglutinin-esterase-fusion glycoprotein chain 2</fullName>
            <shortName evidence="1">HEF2</shortName>
        </recommendedName>
    </component>
</protein>
<organism>
    <name type="scientific">Influenza C virus (strain C/Pig/Beijing/10/1981)</name>
    <dbReference type="NCBI Taxonomy" id="11564"/>
    <lineage>
        <taxon>Viruses</taxon>
        <taxon>Riboviria</taxon>
        <taxon>Orthornavirae</taxon>
        <taxon>Negarnaviricota</taxon>
        <taxon>Polyploviricotina</taxon>
        <taxon>Insthoviricetes</taxon>
        <taxon>Articulavirales</taxon>
        <taxon>Orthomyxoviridae</taxon>
        <taxon>Gammainfluenzavirus</taxon>
        <taxon>Gammainfluenzavirus influenzae</taxon>
        <taxon>Influenza C virus</taxon>
    </lineage>
</organism>
<evidence type="ECO:0000255" key="1">
    <source>
        <dbReference type="HAMAP-Rule" id="MF_04072"/>
    </source>
</evidence>
<feature type="chain" id="PRO_0000440764" description="Hemagglutinin-esterase-fusion glycoprotein chain 1" evidence="1">
    <location>
        <begin position="1"/>
        <end position="433"/>
    </location>
</feature>
<feature type="chain" id="PRO_0000039163" description="Hemagglutinin-esterase-fusion glycoprotein chain 2" evidence="1">
    <location>
        <begin position="434"/>
        <end position="642"/>
    </location>
</feature>
<feature type="topological domain" description="Extracellular" evidence="1">
    <location>
        <begin position="1"/>
        <end position="617"/>
    </location>
</feature>
<feature type="transmembrane region" description="Helical" evidence="1">
    <location>
        <begin position="618"/>
        <end position="638"/>
    </location>
</feature>
<feature type="topological domain" description="Cytoplasmic" evidence="1">
    <location>
        <begin position="639"/>
        <end position="642"/>
    </location>
</feature>
<feature type="region of interest" description="Esterase domain-1" evidence="1">
    <location>
        <begin position="1" status="less than"/>
        <end position="83"/>
    </location>
</feature>
<feature type="region of interest" description="Fusion domain-1" evidence="1">
    <location>
        <position position="1" status="uncertain"/>
    </location>
</feature>
<feature type="region of interest" description="N-acetyl-9-O-acetylneuraminic acid binding" evidence="1">
    <location>
        <begin position="83"/>
        <end position="297"/>
    </location>
</feature>
<feature type="region of interest" description="Esterase domain-2" evidence="1">
    <location>
        <begin position="297"/>
        <end position="351"/>
    </location>
</feature>
<feature type="region of interest" description="Fusion domain-2" evidence="1">
    <location>
        <begin position="352"/>
        <end position="637"/>
    </location>
</feature>
<feature type="active site" description="Charge relay system" evidence="1">
    <location>
        <position position="353"/>
    </location>
</feature>
<feature type="active site" description="Charge relay system" evidence="1">
    <location>
        <position position="356"/>
    </location>
</feature>
<feature type="glycosylation site" description="N-linked (GlcNAc...) asparagine; by host" evidence="1">
    <location>
        <position position="13"/>
    </location>
</feature>
<feature type="glycosylation site" description="N-linked (GlcNAc...) asparagine; by host" evidence="1">
    <location>
        <position position="48"/>
    </location>
</feature>
<feature type="glycosylation site" description="N-linked (GlcNAc...) asparagine; by host" evidence="1">
    <location>
        <position position="131"/>
    </location>
</feature>
<feature type="glycosylation site" description="N-linked (GlcNAc...) asparagine; by host" evidence="1">
    <location>
        <position position="176"/>
    </location>
</feature>
<feature type="glycosylation site" description="N-linked (GlcNAc...) asparagine; by host" evidence="1">
    <location>
        <position position="382"/>
    </location>
</feature>
<feature type="glycosylation site" description="N-linked (GlcNAc...) asparagine; by host" evidence="1">
    <location>
        <position position="539"/>
    </location>
</feature>
<feature type="glycosylation site" description="N-linked (GlcNAc...) asparagine; by host" evidence="1">
    <location>
        <position position="590"/>
    </location>
</feature>
<feature type="disulfide bond" evidence="1">
    <location>
        <begin position="197"/>
        <end position="239"/>
    </location>
</feature>
<feature type="disulfide bond" evidence="1">
    <location>
        <begin position="216"/>
        <end position="303"/>
    </location>
</feature>
<feature type="disulfide bond" evidence="1">
    <location>
        <begin position="224"/>
        <end position="276"/>
    </location>
</feature>
<feature type="non-terminal residue">
    <location>
        <position position="1"/>
    </location>
</feature>
<name>HEMA_INCP1</name>
<organismHost>
    <name type="scientific">Homo sapiens</name>
    <name type="common">Human</name>
    <dbReference type="NCBI Taxonomy" id="9606"/>
</organismHost>
<organismHost>
    <name type="scientific">Sus scrofa</name>
    <name type="common">Pig</name>
    <dbReference type="NCBI Taxonomy" id="9823"/>
</organismHost>
<comment type="function">
    <text evidence="1">Binds to the N-acetyl-9-O-acetylneuraminic acid residues on the cell surface, bringing about the attachment of the virus particle to the cell. Plays a major role in the determination of host range restriction and virulence. Class I viral fusion protein. Responsible for penetration of the virus into the cell cytoplasm by mediating the fusion of the membrane of the endocytosed virus particle with the endosomal membrane. Low pH in endosomes induce an irreversible conformational change in HEF2, releasing the fusion hydrophobic peptide. Several trimers are required to form a competent fusion pore. Displays a receptor-destroying activity which is a neuraminidate-O-acetyl esterase. This activity cleaves off any receptor on the cell surface, which would otherwise prevent virions release. These cleavages prevent self-aggregation and ensure the efficient spread of the progeny virus from cell to cell.</text>
</comment>
<comment type="catalytic activity">
    <reaction evidence="1">
        <text>N-acetyl-9-O-acetylneuraminate + H2O = N-acetylneuraminate + acetate + H(+)</text>
        <dbReference type="Rhea" id="RHEA:22600"/>
        <dbReference type="ChEBI" id="CHEBI:15377"/>
        <dbReference type="ChEBI" id="CHEBI:15378"/>
        <dbReference type="ChEBI" id="CHEBI:28999"/>
        <dbReference type="ChEBI" id="CHEBI:30089"/>
        <dbReference type="ChEBI" id="CHEBI:35418"/>
        <dbReference type="EC" id="3.1.1.53"/>
    </reaction>
</comment>
<comment type="catalytic activity">
    <reaction evidence="1">
        <text>N-acetyl-4-O-acetylneuraminate + H2O = N-acetylneuraminate + acetate + H(+)</text>
        <dbReference type="Rhea" id="RHEA:25564"/>
        <dbReference type="ChEBI" id="CHEBI:15377"/>
        <dbReference type="ChEBI" id="CHEBI:15378"/>
        <dbReference type="ChEBI" id="CHEBI:29006"/>
        <dbReference type="ChEBI" id="CHEBI:30089"/>
        <dbReference type="ChEBI" id="CHEBI:35418"/>
        <dbReference type="EC" id="3.1.1.53"/>
    </reaction>
</comment>
<comment type="subunit">
    <text evidence="1">Homotrimer of disulfide-linked HEF1-HEF2.</text>
</comment>
<comment type="subcellular location">
    <subcellularLocation>
        <location evidence="1">Virion membrane</location>
        <topology evidence="1">Single-pass type I membrane protein</topology>
    </subcellularLocation>
    <subcellularLocation>
        <location evidence="1">Host cell membrane</location>
        <topology evidence="1">Single-pass type I membrane protein</topology>
    </subcellularLocation>
</comment>
<comment type="PTM">
    <text evidence="1">In natural infection, inactive HEF is matured into HEF1 and HEF2 outside the cell by one or more trypsin-like, arginine-specific endoprotease.</text>
</comment>
<comment type="similarity">
    <text evidence="1">Belongs to the influenza viruses hemagglutinin family.</text>
</comment>